<gene>
    <name evidence="1" type="primary">atpH</name>
    <name type="ordered locus">BLi03929</name>
    <name type="ordered locus">BL03997</name>
</gene>
<organism>
    <name type="scientific">Bacillus licheniformis (strain ATCC 14580 / DSM 13 / JCM 2505 / CCUG 7422 / NBRC 12200 / NCIMB 9375 / NCTC 10341 / NRRL NRS-1264 / Gibson 46)</name>
    <dbReference type="NCBI Taxonomy" id="279010"/>
    <lineage>
        <taxon>Bacteria</taxon>
        <taxon>Bacillati</taxon>
        <taxon>Bacillota</taxon>
        <taxon>Bacilli</taxon>
        <taxon>Bacillales</taxon>
        <taxon>Bacillaceae</taxon>
        <taxon>Bacillus</taxon>
    </lineage>
</organism>
<feature type="chain" id="PRO_0000370892" description="ATP synthase subunit delta">
    <location>
        <begin position="1"/>
        <end position="184"/>
    </location>
</feature>
<accession>Q65DX1</accession>
<accession>Q62PE2</accession>
<dbReference type="EMBL" id="CP000002">
    <property type="protein sequence ID" value="AAU25369.1"/>
    <property type="molecule type" value="Genomic_DNA"/>
</dbReference>
<dbReference type="EMBL" id="AE017333">
    <property type="protein sequence ID" value="AAU42743.1"/>
    <property type="molecule type" value="Genomic_DNA"/>
</dbReference>
<dbReference type="RefSeq" id="WP_003186011.1">
    <property type="nucleotide sequence ID" value="NC_006322.1"/>
</dbReference>
<dbReference type="SMR" id="Q65DX1"/>
<dbReference type="STRING" id="279010.BL03997"/>
<dbReference type="KEGG" id="bld:BLi03929"/>
<dbReference type="KEGG" id="bli:BL03997"/>
<dbReference type="eggNOG" id="COG0712">
    <property type="taxonomic scope" value="Bacteria"/>
</dbReference>
<dbReference type="HOGENOM" id="CLU_085114_4_1_9"/>
<dbReference type="Proteomes" id="UP000000606">
    <property type="component" value="Chromosome"/>
</dbReference>
<dbReference type="GO" id="GO:0005886">
    <property type="term" value="C:plasma membrane"/>
    <property type="evidence" value="ECO:0007669"/>
    <property type="project" value="UniProtKB-SubCell"/>
</dbReference>
<dbReference type="GO" id="GO:0045259">
    <property type="term" value="C:proton-transporting ATP synthase complex"/>
    <property type="evidence" value="ECO:0007669"/>
    <property type="project" value="UniProtKB-KW"/>
</dbReference>
<dbReference type="GO" id="GO:0046933">
    <property type="term" value="F:proton-transporting ATP synthase activity, rotational mechanism"/>
    <property type="evidence" value="ECO:0007669"/>
    <property type="project" value="UniProtKB-UniRule"/>
</dbReference>
<dbReference type="Gene3D" id="1.10.520.20">
    <property type="entry name" value="N-terminal domain of the delta subunit of the F1F0-ATP synthase"/>
    <property type="match status" value="1"/>
</dbReference>
<dbReference type="HAMAP" id="MF_01416">
    <property type="entry name" value="ATP_synth_delta_bact"/>
    <property type="match status" value="1"/>
</dbReference>
<dbReference type="InterPro" id="IPR026015">
    <property type="entry name" value="ATP_synth_OSCP/delta_N_sf"/>
</dbReference>
<dbReference type="InterPro" id="IPR020781">
    <property type="entry name" value="ATPase_OSCP/d_CS"/>
</dbReference>
<dbReference type="InterPro" id="IPR000711">
    <property type="entry name" value="ATPase_OSCP/dsu"/>
</dbReference>
<dbReference type="NCBIfam" id="TIGR01145">
    <property type="entry name" value="ATP_synt_delta"/>
    <property type="match status" value="1"/>
</dbReference>
<dbReference type="NCBIfam" id="NF004403">
    <property type="entry name" value="PRK05758.2-4"/>
    <property type="match status" value="1"/>
</dbReference>
<dbReference type="PANTHER" id="PTHR11910">
    <property type="entry name" value="ATP SYNTHASE DELTA CHAIN"/>
    <property type="match status" value="1"/>
</dbReference>
<dbReference type="Pfam" id="PF00213">
    <property type="entry name" value="OSCP"/>
    <property type="match status" value="1"/>
</dbReference>
<dbReference type="PRINTS" id="PR00125">
    <property type="entry name" value="ATPASEDELTA"/>
</dbReference>
<dbReference type="SUPFAM" id="SSF47928">
    <property type="entry name" value="N-terminal domain of the delta subunit of the F1F0-ATP synthase"/>
    <property type="match status" value="1"/>
</dbReference>
<dbReference type="PROSITE" id="PS00389">
    <property type="entry name" value="ATPASE_DELTA"/>
    <property type="match status" value="1"/>
</dbReference>
<reference key="1">
    <citation type="journal article" date="2004" name="J. Mol. Microbiol. Biotechnol.">
        <title>The complete genome sequence of Bacillus licheniformis DSM13, an organism with great industrial potential.</title>
        <authorList>
            <person name="Veith B."/>
            <person name="Herzberg C."/>
            <person name="Steckel S."/>
            <person name="Feesche J."/>
            <person name="Maurer K.H."/>
            <person name="Ehrenreich P."/>
            <person name="Baeumer S."/>
            <person name="Henne A."/>
            <person name="Liesegang H."/>
            <person name="Merkl R."/>
            <person name="Ehrenreich A."/>
            <person name="Gottschalk G."/>
        </authorList>
    </citation>
    <scope>NUCLEOTIDE SEQUENCE [LARGE SCALE GENOMIC DNA]</scope>
    <source>
        <strain>ATCC 14580 / DSM 13 / JCM 2505 / CCUG 7422 / NBRC 12200 / NCIMB 9375 / NCTC 10341 / NRRL NRS-1264 / Gibson 46</strain>
    </source>
</reference>
<reference key="2">
    <citation type="journal article" date="2004" name="Genome Biol.">
        <title>Complete genome sequence of the industrial bacterium Bacillus licheniformis and comparisons with closely related Bacillus species.</title>
        <authorList>
            <person name="Rey M.W."/>
            <person name="Ramaiya P."/>
            <person name="Nelson B.A."/>
            <person name="Brody-Karpin S.D."/>
            <person name="Zaretsky E.J."/>
            <person name="Tang M."/>
            <person name="Lopez de Leon A."/>
            <person name="Xiang H."/>
            <person name="Gusti V."/>
            <person name="Clausen I.G."/>
            <person name="Olsen P.B."/>
            <person name="Rasmussen M.D."/>
            <person name="Andersen J.T."/>
            <person name="Joergensen P.L."/>
            <person name="Larsen T.S."/>
            <person name="Sorokin A."/>
            <person name="Bolotin A."/>
            <person name="Lapidus A."/>
            <person name="Galleron N."/>
            <person name="Ehrlich S.D."/>
            <person name="Berka R.M."/>
        </authorList>
    </citation>
    <scope>NUCLEOTIDE SEQUENCE [LARGE SCALE GENOMIC DNA]</scope>
    <source>
        <strain>ATCC 14580 / DSM 13 / JCM 2505 / CCUG 7422 / NBRC 12200 / NCIMB 9375 / NCTC 10341 / NRRL NRS-1264 / Gibson 46</strain>
    </source>
</reference>
<evidence type="ECO:0000255" key="1">
    <source>
        <dbReference type="HAMAP-Rule" id="MF_01416"/>
    </source>
</evidence>
<sequence>MSQSAVSKRYAAALFDIALESKLVNEIEEELTVVKKIFIEHKDLNAVLGHPKVPAEKKKQILKDSFGSVSTAVLHTLYLLVDRSRTSIVPDLADEYVKMANRFRGTEDAIVYSVKPLSEEEISSFSQVFAKEAGAASLRVRNEVNPDLIGGVKIRIGNRIYDGSVRGKLDRIERQLAGENRKKG</sequence>
<proteinExistence type="inferred from homology"/>
<name>ATPD_BACLD</name>
<comment type="function">
    <text evidence="1">F(1)F(0) ATP synthase produces ATP from ADP in the presence of a proton or sodium gradient. F-type ATPases consist of two structural domains, F(1) containing the extramembraneous catalytic core and F(0) containing the membrane proton channel, linked together by a central stalk and a peripheral stalk. During catalysis, ATP synthesis in the catalytic domain of F(1) is coupled via a rotary mechanism of the central stalk subunits to proton translocation.</text>
</comment>
<comment type="function">
    <text evidence="1">This protein is part of the stalk that links CF(0) to CF(1). It either transmits conformational changes from CF(0) to CF(1) or is implicated in proton conduction.</text>
</comment>
<comment type="subunit">
    <text evidence="1">F-type ATPases have 2 components, F(1) - the catalytic core - and F(0) - the membrane proton channel. F(1) has five subunits: alpha(3), beta(3), gamma(1), delta(1), epsilon(1). F(0) has three main subunits: a(1), b(2) and c(10-14). The alpha and beta chains form an alternating ring which encloses part of the gamma chain. F(1) is attached to F(0) by a central stalk formed by the gamma and epsilon chains, while a peripheral stalk is formed by the delta and b chains.</text>
</comment>
<comment type="subcellular location">
    <subcellularLocation>
        <location evidence="1">Cell membrane</location>
        <topology evidence="1">Peripheral membrane protein</topology>
    </subcellularLocation>
</comment>
<comment type="similarity">
    <text evidence="1">Belongs to the ATPase delta chain family.</text>
</comment>
<protein>
    <recommendedName>
        <fullName evidence="1">ATP synthase subunit delta</fullName>
    </recommendedName>
    <alternativeName>
        <fullName evidence="1">ATP synthase F(1) sector subunit delta</fullName>
    </alternativeName>
    <alternativeName>
        <fullName evidence="1">F-type ATPase subunit delta</fullName>
        <shortName evidence="1">F-ATPase subunit delta</shortName>
    </alternativeName>
</protein>
<keyword id="KW-0066">ATP synthesis</keyword>
<keyword id="KW-1003">Cell membrane</keyword>
<keyword id="KW-0139">CF(1)</keyword>
<keyword id="KW-0375">Hydrogen ion transport</keyword>
<keyword id="KW-0406">Ion transport</keyword>
<keyword id="KW-0472">Membrane</keyword>
<keyword id="KW-1185">Reference proteome</keyword>
<keyword id="KW-0813">Transport</keyword>